<dbReference type="EC" id="7.1.1.-" evidence="1"/>
<dbReference type="EMBL" id="AM933172">
    <property type="protein sequence ID" value="CAR33892.1"/>
    <property type="status" value="ALT_INIT"/>
    <property type="molecule type" value="Genomic_DNA"/>
</dbReference>
<dbReference type="SMR" id="B5R307"/>
<dbReference type="KEGG" id="set:SEN2308"/>
<dbReference type="HOGENOM" id="CLU_015134_3_2_6"/>
<dbReference type="Proteomes" id="UP000000613">
    <property type="component" value="Chromosome"/>
</dbReference>
<dbReference type="GO" id="GO:0030964">
    <property type="term" value="C:NADH dehydrogenase complex"/>
    <property type="evidence" value="ECO:0007669"/>
    <property type="project" value="InterPro"/>
</dbReference>
<dbReference type="GO" id="GO:0005886">
    <property type="term" value="C:plasma membrane"/>
    <property type="evidence" value="ECO:0007669"/>
    <property type="project" value="UniProtKB-SubCell"/>
</dbReference>
<dbReference type="GO" id="GO:0051287">
    <property type="term" value="F:NAD binding"/>
    <property type="evidence" value="ECO:0007669"/>
    <property type="project" value="InterPro"/>
</dbReference>
<dbReference type="GO" id="GO:0008137">
    <property type="term" value="F:NADH dehydrogenase (ubiquinone) activity"/>
    <property type="evidence" value="ECO:0007669"/>
    <property type="project" value="InterPro"/>
</dbReference>
<dbReference type="GO" id="GO:0050136">
    <property type="term" value="F:NADH:ubiquinone reductase (non-electrogenic) activity"/>
    <property type="evidence" value="ECO:0007669"/>
    <property type="project" value="UniProtKB-UniRule"/>
</dbReference>
<dbReference type="GO" id="GO:0048038">
    <property type="term" value="F:quinone binding"/>
    <property type="evidence" value="ECO:0007669"/>
    <property type="project" value="UniProtKB-KW"/>
</dbReference>
<dbReference type="FunFam" id="1.10.645.10:FF:000001">
    <property type="entry name" value="NADH-quinone oxidoreductase subunit C/D"/>
    <property type="match status" value="1"/>
</dbReference>
<dbReference type="FunFam" id="3.30.460.80:FF:000001">
    <property type="entry name" value="NADH-quinone oxidoreductase subunit C/D"/>
    <property type="match status" value="1"/>
</dbReference>
<dbReference type="Gene3D" id="1.10.645.10">
    <property type="entry name" value="Cytochrome-c3 Hydrogenase, chain B"/>
    <property type="match status" value="1"/>
</dbReference>
<dbReference type="Gene3D" id="3.30.460.80">
    <property type="entry name" value="NADH:ubiquinone oxidoreductase, 30kDa subunit"/>
    <property type="match status" value="1"/>
</dbReference>
<dbReference type="HAMAP" id="MF_01359">
    <property type="entry name" value="NDH1_NuoCD_1"/>
    <property type="match status" value="1"/>
</dbReference>
<dbReference type="HAMAP" id="MF_01358">
    <property type="entry name" value="NDH1_NuoD"/>
    <property type="match status" value="1"/>
</dbReference>
<dbReference type="InterPro" id="IPR010218">
    <property type="entry name" value="NADH_DH_suC"/>
</dbReference>
<dbReference type="InterPro" id="IPR023062">
    <property type="entry name" value="NADH_DH_suCD"/>
</dbReference>
<dbReference type="InterPro" id="IPR001135">
    <property type="entry name" value="NADH_Q_OxRdtase_suD"/>
</dbReference>
<dbReference type="InterPro" id="IPR037232">
    <property type="entry name" value="NADH_quin_OxRdtase_su_C/D-like"/>
</dbReference>
<dbReference type="InterPro" id="IPR001268">
    <property type="entry name" value="NADH_UbQ_OxRdtase_30kDa_su"/>
</dbReference>
<dbReference type="InterPro" id="IPR014029">
    <property type="entry name" value="NADH_UbQ_OxRdtase_49kDa_CS"/>
</dbReference>
<dbReference type="InterPro" id="IPR022885">
    <property type="entry name" value="NDH1_su_D/H"/>
</dbReference>
<dbReference type="InterPro" id="IPR029014">
    <property type="entry name" value="NiFe-Hase_large"/>
</dbReference>
<dbReference type="NCBIfam" id="TIGR01961">
    <property type="entry name" value="NuoC_fam"/>
    <property type="match status" value="1"/>
</dbReference>
<dbReference type="NCBIfam" id="TIGR01962">
    <property type="entry name" value="NuoD"/>
    <property type="match status" value="1"/>
</dbReference>
<dbReference type="NCBIfam" id="NF004739">
    <property type="entry name" value="PRK06075.1"/>
    <property type="match status" value="1"/>
</dbReference>
<dbReference type="NCBIfam" id="NF008728">
    <property type="entry name" value="PRK11742.1"/>
    <property type="match status" value="1"/>
</dbReference>
<dbReference type="PANTHER" id="PTHR11993:SF45">
    <property type="entry name" value="NADH-QUINONE OXIDOREDUCTASE SUBUNIT C_D"/>
    <property type="match status" value="1"/>
</dbReference>
<dbReference type="PANTHER" id="PTHR11993">
    <property type="entry name" value="NADH-UBIQUINONE OXIDOREDUCTASE 49 KDA SUBUNIT"/>
    <property type="match status" value="1"/>
</dbReference>
<dbReference type="Pfam" id="PF00329">
    <property type="entry name" value="Complex1_30kDa"/>
    <property type="match status" value="1"/>
</dbReference>
<dbReference type="Pfam" id="PF00346">
    <property type="entry name" value="Complex1_49kDa"/>
    <property type="match status" value="1"/>
</dbReference>
<dbReference type="SUPFAM" id="SSF56762">
    <property type="entry name" value="HydB/Nqo4-like"/>
    <property type="match status" value="1"/>
</dbReference>
<dbReference type="SUPFAM" id="SSF143243">
    <property type="entry name" value="Nqo5-like"/>
    <property type="match status" value="1"/>
</dbReference>
<dbReference type="PROSITE" id="PS00535">
    <property type="entry name" value="COMPLEX1_49K"/>
    <property type="match status" value="1"/>
</dbReference>
<reference key="1">
    <citation type="journal article" date="2008" name="Genome Res.">
        <title>Comparative genome analysis of Salmonella enteritidis PT4 and Salmonella gallinarum 287/91 provides insights into evolutionary and host adaptation pathways.</title>
        <authorList>
            <person name="Thomson N.R."/>
            <person name="Clayton D.J."/>
            <person name="Windhorst D."/>
            <person name="Vernikos G."/>
            <person name="Davidson S."/>
            <person name="Churcher C."/>
            <person name="Quail M.A."/>
            <person name="Stevens M."/>
            <person name="Jones M.A."/>
            <person name="Watson M."/>
            <person name="Barron A."/>
            <person name="Layton A."/>
            <person name="Pickard D."/>
            <person name="Kingsley R.A."/>
            <person name="Bignell A."/>
            <person name="Clark L."/>
            <person name="Harris B."/>
            <person name="Ormond D."/>
            <person name="Abdellah Z."/>
            <person name="Brooks K."/>
            <person name="Cherevach I."/>
            <person name="Chillingworth T."/>
            <person name="Woodward J."/>
            <person name="Norberczak H."/>
            <person name="Lord A."/>
            <person name="Arrowsmith C."/>
            <person name="Jagels K."/>
            <person name="Moule S."/>
            <person name="Mungall K."/>
            <person name="Saunders M."/>
            <person name="Whitehead S."/>
            <person name="Chabalgoity J.A."/>
            <person name="Maskell D."/>
            <person name="Humphreys T."/>
            <person name="Roberts M."/>
            <person name="Barrow P.A."/>
            <person name="Dougan G."/>
            <person name="Parkhill J."/>
        </authorList>
    </citation>
    <scope>NUCLEOTIDE SEQUENCE [LARGE SCALE GENOMIC DNA]</scope>
    <source>
        <strain>P125109</strain>
    </source>
</reference>
<proteinExistence type="inferred from homology"/>
<organism>
    <name type="scientific">Salmonella enteritidis PT4 (strain P125109)</name>
    <dbReference type="NCBI Taxonomy" id="550537"/>
    <lineage>
        <taxon>Bacteria</taxon>
        <taxon>Pseudomonadati</taxon>
        <taxon>Pseudomonadota</taxon>
        <taxon>Gammaproteobacteria</taxon>
        <taxon>Enterobacterales</taxon>
        <taxon>Enterobacteriaceae</taxon>
        <taxon>Salmonella</taxon>
    </lineage>
</organism>
<gene>
    <name evidence="1" type="primary">nuoC</name>
    <name evidence="1" type="synonym">nuoCD</name>
    <name evidence="1" type="synonym">nuoD</name>
    <name type="ordered locus">SEN2308</name>
</gene>
<feature type="chain" id="PRO_0000358684" description="NADH-quinone oxidoreductase subunit C/D">
    <location>
        <begin position="1"/>
        <end position="596"/>
    </location>
</feature>
<feature type="region of interest" description="NADH dehydrogenase I subunit C" evidence="1">
    <location>
        <begin position="1"/>
        <end position="186"/>
    </location>
</feature>
<feature type="region of interest" description="NADH dehydrogenase I subunit D" evidence="1">
    <location>
        <begin position="210"/>
        <end position="596"/>
    </location>
</feature>
<protein>
    <recommendedName>
        <fullName evidence="1">NADH-quinone oxidoreductase subunit C/D</fullName>
        <ecNumber evidence="1">7.1.1.-</ecNumber>
    </recommendedName>
    <alternativeName>
        <fullName evidence="1">NADH dehydrogenase I subunit C/D</fullName>
    </alternativeName>
    <alternativeName>
        <fullName evidence="1">NDH-1 subunit C/D</fullName>
    </alternativeName>
</protein>
<name>NUOCD_SALEP</name>
<evidence type="ECO:0000255" key="1">
    <source>
        <dbReference type="HAMAP-Rule" id="MF_01359"/>
    </source>
</evidence>
<evidence type="ECO:0000305" key="2"/>
<comment type="function">
    <text evidence="1">NDH-1 shuttles electrons from NADH, via FMN and iron-sulfur (Fe-S) centers, to quinones in the respiratory chain. The immediate electron acceptor for the enzyme in this species is believed to be ubiquinone. Couples the redox reaction to proton translocation (for every two electrons transferred, four hydrogen ions are translocated across the cytoplasmic membrane), and thus conserves the redox energy in a proton gradient.</text>
</comment>
<comment type="catalytic activity">
    <reaction evidence="1">
        <text>a quinone + NADH + 5 H(+)(in) = a quinol + NAD(+) + 4 H(+)(out)</text>
        <dbReference type="Rhea" id="RHEA:57888"/>
        <dbReference type="ChEBI" id="CHEBI:15378"/>
        <dbReference type="ChEBI" id="CHEBI:24646"/>
        <dbReference type="ChEBI" id="CHEBI:57540"/>
        <dbReference type="ChEBI" id="CHEBI:57945"/>
        <dbReference type="ChEBI" id="CHEBI:132124"/>
    </reaction>
</comment>
<comment type="subunit">
    <text evidence="1">NDH-1 is composed of 13 different subunits. Subunits NuoB, CD, E, F, and G constitute the peripheral sector of the complex.</text>
</comment>
<comment type="subcellular location">
    <subcellularLocation>
        <location evidence="1">Cell inner membrane</location>
        <topology evidence="1">Peripheral membrane protein</topology>
        <orientation evidence="1">Cytoplasmic side</orientation>
    </subcellularLocation>
</comment>
<comment type="similarity">
    <text evidence="1">In the N-terminal section; belongs to the complex I 30 kDa subunit family.</text>
</comment>
<comment type="similarity">
    <text evidence="1">In the C-terminal section; belongs to the complex I 49 kDa subunit family.</text>
</comment>
<comment type="sequence caution" evidence="2">
    <conflict type="erroneous initiation">
        <sequence resource="EMBL-CDS" id="CAR33892"/>
    </conflict>
</comment>
<sequence>MTDLTAQDAAWSTRDHLDDPVIGELRNRFGPDAFTVQATRTGIPVVWVKREQLLEVGDFLKKLPKPYVMLFDLHGMDERLRTHRDGLPAADFSVFYHLISIERNRDIMLKVALSENDLRVPTFTKLFPNANWYERETWEMFGIDIEGHPHLTRIMMPQTWEGHPLRKDYPARATEFDPFELTKAKQDLEMEALTFKPEDWGMKRGTDNEDFMFLNLGPNHPSAHGAFRIILQLDGEEIVDCVPDIGYHHRGAEKMGERQSWHSYIPYTDRIEYLGGCVNEMPYVLAVEKLAGITVPDRVNVIRVMLSELFRINSHLLYISTFIQDVGAMTPVFFAFTDRQKIYDLVEAITGFRMHPAWFRIGGVAHDLPRGWDRLLREFLEWMPKRLDSYEKAALRNTILKGRSQGVAAYGAKEALEWGTTGAGLRATGIDFDVRKWRPYSGYENFDFEVPVGGGVSDCYTRVMLKVEELRQSLRILQQCLDNMPEGPFKADHPLTTPPPKERTLQHIETLITHFLQVSWGPVMPAQESFQMVEATKGINSYYLTSDGSTMSYRTRVRTPSFAHLQQIPSAIRGSLVSDLIVYLGSIDFVMSDVDR</sequence>
<accession>B5R307</accession>
<keyword id="KW-0997">Cell inner membrane</keyword>
<keyword id="KW-1003">Cell membrane</keyword>
<keyword id="KW-0472">Membrane</keyword>
<keyword id="KW-0511">Multifunctional enzyme</keyword>
<keyword id="KW-0520">NAD</keyword>
<keyword id="KW-0874">Quinone</keyword>
<keyword id="KW-1278">Translocase</keyword>
<keyword id="KW-0813">Transport</keyword>
<keyword id="KW-0830">Ubiquinone</keyword>